<evidence type="ECO:0000255" key="1">
    <source>
        <dbReference type="HAMAP-Rule" id="MF_01850"/>
    </source>
</evidence>
<accession>B4TWA6</accession>
<gene>
    <name evidence="1" type="primary">ttcA</name>
    <name type="ordered locus">SeSA_A1777</name>
</gene>
<dbReference type="EC" id="2.8.1.-" evidence="1"/>
<dbReference type="EMBL" id="CP001127">
    <property type="protein sequence ID" value="ACF90128.1"/>
    <property type="molecule type" value="Genomic_DNA"/>
</dbReference>
<dbReference type="RefSeq" id="WP_001156210.1">
    <property type="nucleotide sequence ID" value="NC_011094.1"/>
</dbReference>
<dbReference type="SMR" id="B4TWA6"/>
<dbReference type="KEGG" id="sew:SeSA_A1777"/>
<dbReference type="HOGENOM" id="CLU_026481_0_0_6"/>
<dbReference type="Proteomes" id="UP000001865">
    <property type="component" value="Chromosome"/>
</dbReference>
<dbReference type="GO" id="GO:0005737">
    <property type="term" value="C:cytoplasm"/>
    <property type="evidence" value="ECO:0007669"/>
    <property type="project" value="UniProtKB-SubCell"/>
</dbReference>
<dbReference type="GO" id="GO:0051539">
    <property type="term" value="F:4 iron, 4 sulfur cluster binding"/>
    <property type="evidence" value="ECO:0007669"/>
    <property type="project" value="UniProtKB-UniRule"/>
</dbReference>
<dbReference type="GO" id="GO:0005524">
    <property type="term" value="F:ATP binding"/>
    <property type="evidence" value="ECO:0007669"/>
    <property type="project" value="UniProtKB-UniRule"/>
</dbReference>
<dbReference type="GO" id="GO:0000287">
    <property type="term" value="F:magnesium ion binding"/>
    <property type="evidence" value="ECO:0007669"/>
    <property type="project" value="UniProtKB-UniRule"/>
</dbReference>
<dbReference type="GO" id="GO:0016783">
    <property type="term" value="F:sulfurtransferase activity"/>
    <property type="evidence" value="ECO:0007669"/>
    <property type="project" value="UniProtKB-UniRule"/>
</dbReference>
<dbReference type="GO" id="GO:0000049">
    <property type="term" value="F:tRNA binding"/>
    <property type="evidence" value="ECO:0007669"/>
    <property type="project" value="UniProtKB-KW"/>
</dbReference>
<dbReference type="GO" id="GO:0034227">
    <property type="term" value="P:tRNA thio-modification"/>
    <property type="evidence" value="ECO:0007669"/>
    <property type="project" value="UniProtKB-UniRule"/>
</dbReference>
<dbReference type="CDD" id="cd24138">
    <property type="entry name" value="TtcA-like"/>
    <property type="match status" value="1"/>
</dbReference>
<dbReference type="FunFam" id="3.40.50.620:FF:000046">
    <property type="entry name" value="tRNA-cytidine(32) 2-sulfurtransferase"/>
    <property type="match status" value="1"/>
</dbReference>
<dbReference type="Gene3D" id="3.40.50.620">
    <property type="entry name" value="HUPs"/>
    <property type="match status" value="1"/>
</dbReference>
<dbReference type="HAMAP" id="MF_01850">
    <property type="entry name" value="TtcA"/>
    <property type="match status" value="1"/>
</dbReference>
<dbReference type="InterPro" id="IPR014729">
    <property type="entry name" value="Rossmann-like_a/b/a_fold"/>
</dbReference>
<dbReference type="InterPro" id="IPR011063">
    <property type="entry name" value="TilS/TtcA_N"/>
</dbReference>
<dbReference type="InterPro" id="IPR012089">
    <property type="entry name" value="tRNA_Cyd_32_2_STrfase"/>
</dbReference>
<dbReference type="InterPro" id="IPR035107">
    <property type="entry name" value="tRNA_thiolation_TtcA_Ctu1"/>
</dbReference>
<dbReference type="NCBIfam" id="NF007972">
    <property type="entry name" value="PRK10696.1"/>
    <property type="match status" value="1"/>
</dbReference>
<dbReference type="PANTHER" id="PTHR43686:SF1">
    <property type="entry name" value="AMINOTRAN_5 DOMAIN-CONTAINING PROTEIN"/>
    <property type="match status" value="1"/>
</dbReference>
<dbReference type="PANTHER" id="PTHR43686">
    <property type="entry name" value="SULFURTRANSFERASE-RELATED"/>
    <property type="match status" value="1"/>
</dbReference>
<dbReference type="Pfam" id="PF01171">
    <property type="entry name" value="ATP_bind_3"/>
    <property type="match status" value="1"/>
</dbReference>
<dbReference type="PIRSF" id="PIRSF004976">
    <property type="entry name" value="ATPase_YdaO"/>
    <property type="match status" value="1"/>
</dbReference>
<dbReference type="SUPFAM" id="SSF52402">
    <property type="entry name" value="Adenine nucleotide alpha hydrolases-like"/>
    <property type="match status" value="1"/>
</dbReference>
<proteinExistence type="inferred from homology"/>
<name>TTCA_SALSV</name>
<sequence length="311" mass="35374">MQEIQKNTKKEQYNLNKLQKRLRRNVGEAIADFNMIEEGDRIMVCLSGGKDSYTMLEILRNLQQSAPINFSLVAVNLDQKQPGFPEHILPAYLEQLGVEYKIVEENTYGIVKEKIPEGKTTCSLCSRLRRGILYRTATELGATKIALGHHRDDILQTLFLNMFYGGKMKGMPPKLMSDDGKHIVIRPLAYCREKDIIRFAEAKAFPIIPCNLCGSQPNLQRQVIADMLRDWDKRYPGRIETMFSAMQNVVPSHLCDTNLFDFKGITHGSEVVDGGDLAFDREEIPLQPAGWQPEEDDTSLEALRLDVIEVK</sequence>
<organism>
    <name type="scientific">Salmonella schwarzengrund (strain CVM19633)</name>
    <dbReference type="NCBI Taxonomy" id="439843"/>
    <lineage>
        <taxon>Bacteria</taxon>
        <taxon>Pseudomonadati</taxon>
        <taxon>Pseudomonadota</taxon>
        <taxon>Gammaproteobacteria</taxon>
        <taxon>Enterobacterales</taxon>
        <taxon>Enterobacteriaceae</taxon>
        <taxon>Salmonella</taxon>
    </lineage>
</organism>
<comment type="function">
    <text evidence="1">Catalyzes the ATP-dependent 2-thiolation of cytidine in position 32 of tRNA, to form 2-thiocytidine (s(2)C32). The sulfur atoms are provided by the cysteine/cysteine desulfurase (IscS) system.</text>
</comment>
<comment type="catalytic activity">
    <reaction evidence="1">
        <text>cytidine(32) in tRNA + S-sulfanyl-L-cysteinyl-[cysteine desulfurase] + AH2 + ATP = 2-thiocytidine(32) in tRNA + L-cysteinyl-[cysteine desulfurase] + A + AMP + diphosphate + H(+)</text>
        <dbReference type="Rhea" id="RHEA:57048"/>
        <dbReference type="Rhea" id="RHEA-COMP:10288"/>
        <dbReference type="Rhea" id="RHEA-COMP:12157"/>
        <dbReference type="Rhea" id="RHEA-COMP:12158"/>
        <dbReference type="Rhea" id="RHEA-COMP:14821"/>
        <dbReference type="ChEBI" id="CHEBI:13193"/>
        <dbReference type="ChEBI" id="CHEBI:15378"/>
        <dbReference type="ChEBI" id="CHEBI:17499"/>
        <dbReference type="ChEBI" id="CHEBI:29950"/>
        <dbReference type="ChEBI" id="CHEBI:30616"/>
        <dbReference type="ChEBI" id="CHEBI:33019"/>
        <dbReference type="ChEBI" id="CHEBI:61963"/>
        <dbReference type="ChEBI" id="CHEBI:82748"/>
        <dbReference type="ChEBI" id="CHEBI:141453"/>
        <dbReference type="ChEBI" id="CHEBI:456215"/>
    </reaction>
    <physiologicalReaction direction="left-to-right" evidence="1">
        <dbReference type="Rhea" id="RHEA:57049"/>
    </physiologicalReaction>
</comment>
<comment type="cofactor">
    <cofactor evidence="1">
        <name>Mg(2+)</name>
        <dbReference type="ChEBI" id="CHEBI:18420"/>
    </cofactor>
</comment>
<comment type="cofactor">
    <cofactor evidence="1">
        <name>[4Fe-4S] cluster</name>
        <dbReference type="ChEBI" id="CHEBI:49883"/>
    </cofactor>
    <text evidence="1">Binds 1 [4Fe-4S] cluster per subunit. The cluster is chelated by three Cys residues, the fourth Fe has a free coordination site that may bind a sulfur atom transferred from the persulfide of IscS.</text>
</comment>
<comment type="pathway">
    <text evidence="1">tRNA modification.</text>
</comment>
<comment type="subunit">
    <text evidence="1">Homodimer.</text>
</comment>
<comment type="subcellular location">
    <subcellularLocation>
        <location evidence="1">Cytoplasm</location>
    </subcellularLocation>
</comment>
<comment type="miscellaneous">
    <text evidence="1">The thiolation reaction likely consists of two steps: a first activation step by ATP to form an adenylated intermediate of the target base of tRNA, and a second nucleophilic substitution step of the sulfur (S) atom supplied by the hydrosulfide attached to the Fe-S cluster.</text>
</comment>
<comment type="similarity">
    <text evidence="1">Belongs to the TtcA family.</text>
</comment>
<protein>
    <recommendedName>
        <fullName evidence="1">tRNA-cytidine(32) 2-sulfurtransferase</fullName>
        <ecNumber evidence="1">2.8.1.-</ecNumber>
    </recommendedName>
    <alternativeName>
        <fullName evidence="1">Two-thiocytidine biosynthesis protein A</fullName>
    </alternativeName>
    <alternativeName>
        <fullName evidence="1">tRNA 2-thiocytidine biosynthesis protein TtcA</fullName>
    </alternativeName>
</protein>
<keyword id="KW-0004">4Fe-4S</keyword>
<keyword id="KW-0067">ATP-binding</keyword>
<keyword id="KW-0963">Cytoplasm</keyword>
<keyword id="KW-0408">Iron</keyword>
<keyword id="KW-0411">Iron-sulfur</keyword>
<keyword id="KW-0460">Magnesium</keyword>
<keyword id="KW-0479">Metal-binding</keyword>
<keyword id="KW-0547">Nucleotide-binding</keyword>
<keyword id="KW-0694">RNA-binding</keyword>
<keyword id="KW-0808">Transferase</keyword>
<keyword id="KW-0819">tRNA processing</keyword>
<keyword id="KW-0820">tRNA-binding</keyword>
<reference key="1">
    <citation type="journal article" date="2011" name="J. Bacteriol.">
        <title>Comparative genomics of 28 Salmonella enterica isolates: evidence for CRISPR-mediated adaptive sublineage evolution.</title>
        <authorList>
            <person name="Fricke W.F."/>
            <person name="Mammel M.K."/>
            <person name="McDermott P.F."/>
            <person name="Tartera C."/>
            <person name="White D.G."/>
            <person name="Leclerc J.E."/>
            <person name="Ravel J."/>
            <person name="Cebula T.A."/>
        </authorList>
    </citation>
    <scope>NUCLEOTIDE SEQUENCE [LARGE SCALE GENOMIC DNA]</scope>
    <source>
        <strain>CVM19633</strain>
    </source>
</reference>
<feature type="chain" id="PRO_1000188661" description="tRNA-cytidine(32) 2-sulfurtransferase">
    <location>
        <begin position="1"/>
        <end position="311"/>
    </location>
</feature>
<feature type="short sequence motif" description="PP-loop motif" evidence="1">
    <location>
        <begin position="47"/>
        <end position="52"/>
    </location>
</feature>
<feature type="binding site" evidence="1">
    <location>
        <position position="122"/>
    </location>
    <ligand>
        <name>[4Fe-4S] cluster</name>
        <dbReference type="ChEBI" id="CHEBI:49883"/>
    </ligand>
</feature>
<feature type="binding site" evidence="1">
    <location>
        <position position="125"/>
    </location>
    <ligand>
        <name>[4Fe-4S] cluster</name>
        <dbReference type="ChEBI" id="CHEBI:49883"/>
    </ligand>
</feature>
<feature type="binding site" evidence="1">
    <location>
        <position position="213"/>
    </location>
    <ligand>
        <name>[4Fe-4S] cluster</name>
        <dbReference type="ChEBI" id="CHEBI:49883"/>
    </ligand>
</feature>